<accession>B7NJI4</accession>
<gene>
    <name evidence="1" type="primary">iraM</name>
    <name type="ordered locus">ECIAI39_1916</name>
</gene>
<organism>
    <name type="scientific">Escherichia coli O7:K1 (strain IAI39 / ExPEC)</name>
    <dbReference type="NCBI Taxonomy" id="585057"/>
    <lineage>
        <taxon>Bacteria</taxon>
        <taxon>Pseudomonadati</taxon>
        <taxon>Pseudomonadota</taxon>
        <taxon>Gammaproteobacteria</taxon>
        <taxon>Enterobacterales</taxon>
        <taxon>Enterobacteriaceae</taxon>
        <taxon>Escherichia</taxon>
    </lineage>
</organism>
<dbReference type="EMBL" id="CU928164">
    <property type="protein sequence ID" value="CAR18046.1"/>
    <property type="molecule type" value="Genomic_DNA"/>
</dbReference>
<dbReference type="RefSeq" id="WP_000871293.1">
    <property type="nucleotide sequence ID" value="NC_011750.1"/>
</dbReference>
<dbReference type="RefSeq" id="YP_002407892.1">
    <property type="nucleotide sequence ID" value="NC_011750.1"/>
</dbReference>
<dbReference type="SMR" id="B7NJI4"/>
<dbReference type="STRING" id="585057.ECIAI39_1916"/>
<dbReference type="KEGG" id="ect:ECIAI39_1916"/>
<dbReference type="HOGENOM" id="CLU_143527_1_0_6"/>
<dbReference type="Proteomes" id="UP000000749">
    <property type="component" value="Chromosome"/>
</dbReference>
<dbReference type="GO" id="GO:0005737">
    <property type="term" value="C:cytoplasm"/>
    <property type="evidence" value="ECO:0007669"/>
    <property type="project" value="UniProtKB-SubCell"/>
</dbReference>
<dbReference type="GO" id="GO:0009267">
    <property type="term" value="P:cellular response to starvation"/>
    <property type="evidence" value="ECO:0007669"/>
    <property type="project" value="UniProtKB-UniRule"/>
</dbReference>
<dbReference type="FunFam" id="2.40.50.650:FF:000001">
    <property type="entry name" value="Anti-adapter protein IraM"/>
    <property type="match status" value="1"/>
</dbReference>
<dbReference type="Gene3D" id="2.40.50.650">
    <property type="match status" value="1"/>
</dbReference>
<dbReference type="HAMAP" id="MF_01199">
    <property type="entry name" value="Anti_adapt_IraM"/>
    <property type="match status" value="1"/>
</dbReference>
<dbReference type="InterPro" id="IPR014448">
    <property type="entry name" value="Anti-adapter_IraM"/>
</dbReference>
<dbReference type="InterPro" id="IPR038679">
    <property type="entry name" value="PmrD_sf"/>
</dbReference>
<dbReference type="NCBIfam" id="NF007393">
    <property type="entry name" value="PRK09919.1"/>
    <property type="match status" value="1"/>
</dbReference>
<dbReference type="PIRSF" id="PIRSF007036">
    <property type="entry name" value="Elb1"/>
    <property type="match status" value="1"/>
</dbReference>
<protein>
    <recommendedName>
        <fullName evidence="1">Anti-adapter protein IraM</fullName>
    </recommendedName>
</protein>
<proteinExistence type="inferred from homology"/>
<sequence>MKWIVIDTVIQPTCGISFSAIWGDMKMIIWYQSTIFLPPGRIFTPVKSGIILKDKEYPITIYNIAPFNKDLWSLLKSSQECPPGESKITNKCLHNSCIIKICPYGLK</sequence>
<keyword id="KW-0963">Cytoplasm</keyword>
<keyword id="KW-0346">Stress response</keyword>
<feature type="chain" id="PRO_1000138497" description="Anti-adapter protein IraM">
    <location>
        <begin position="1"/>
        <end position="107"/>
    </location>
</feature>
<evidence type="ECO:0000255" key="1">
    <source>
        <dbReference type="HAMAP-Rule" id="MF_01199"/>
    </source>
</evidence>
<name>IRAM_ECO7I</name>
<comment type="function">
    <text evidence="1">Inhibits RpoS proteolysis by regulating RssB activity, thereby increasing the stability of the sigma stress factor RpoS during magnesium starvation.</text>
</comment>
<comment type="subcellular location">
    <subcellularLocation>
        <location evidence="1">Cytoplasm</location>
    </subcellularLocation>
</comment>
<comment type="similarity">
    <text evidence="1">Belongs to the IraM/RssC family.</text>
</comment>
<reference key="1">
    <citation type="journal article" date="2009" name="PLoS Genet.">
        <title>Organised genome dynamics in the Escherichia coli species results in highly diverse adaptive paths.</title>
        <authorList>
            <person name="Touchon M."/>
            <person name="Hoede C."/>
            <person name="Tenaillon O."/>
            <person name="Barbe V."/>
            <person name="Baeriswyl S."/>
            <person name="Bidet P."/>
            <person name="Bingen E."/>
            <person name="Bonacorsi S."/>
            <person name="Bouchier C."/>
            <person name="Bouvet O."/>
            <person name="Calteau A."/>
            <person name="Chiapello H."/>
            <person name="Clermont O."/>
            <person name="Cruveiller S."/>
            <person name="Danchin A."/>
            <person name="Diard M."/>
            <person name="Dossat C."/>
            <person name="Karoui M.E."/>
            <person name="Frapy E."/>
            <person name="Garry L."/>
            <person name="Ghigo J.M."/>
            <person name="Gilles A.M."/>
            <person name="Johnson J."/>
            <person name="Le Bouguenec C."/>
            <person name="Lescat M."/>
            <person name="Mangenot S."/>
            <person name="Martinez-Jehanne V."/>
            <person name="Matic I."/>
            <person name="Nassif X."/>
            <person name="Oztas S."/>
            <person name="Petit M.A."/>
            <person name="Pichon C."/>
            <person name="Rouy Z."/>
            <person name="Ruf C.S."/>
            <person name="Schneider D."/>
            <person name="Tourret J."/>
            <person name="Vacherie B."/>
            <person name="Vallenet D."/>
            <person name="Medigue C."/>
            <person name="Rocha E.P.C."/>
            <person name="Denamur E."/>
        </authorList>
    </citation>
    <scope>NUCLEOTIDE SEQUENCE [LARGE SCALE GENOMIC DNA]</scope>
    <source>
        <strain>IAI39 / ExPEC</strain>
    </source>
</reference>